<protein>
    <recommendedName>
        <fullName>Movement protein</fullName>
        <shortName>MP</shortName>
    </recommendedName>
    <alternativeName>
        <fullName>Protein 3A</fullName>
    </alternativeName>
</protein>
<name>MVP_CMVM</name>
<organism>
    <name type="scientific">Cucumber mosaic virus (strain M)</name>
    <name type="common">CMV</name>
    <dbReference type="NCBI Taxonomy" id="31718"/>
    <lineage>
        <taxon>Viruses</taxon>
        <taxon>Riboviria</taxon>
        <taxon>Orthornavirae</taxon>
        <taxon>Kitrinoviricota</taxon>
        <taxon>Alsuviricetes</taxon>
        <taxon>Martellivirales</taxon>
        <taxon>Bromoviridae</taxon>
        <taxon>Cucumovirus</taxon>
        <taxon>Cucumber mosaic virus</taxon>
    </lineage>
</organism>
<proteinExistence type="inferred from homology"/>
<sequence>MAFQGTSRTLTQQSSAATSDDLQKILFSPEAIKKMATECDLGRHHWMRADNAISVRPLVPEVTHGRIASFFKSGYDVGELCSKGYMSVPQVLCAVTRTVSTDAEGSLRIYLADLGDKELSPIDGQCVSLHNHDLPALVSFQPTYDCPMETVGNRKRCFAVVIERHGYIGYTGTTASVCSNWQARFSSKNNNYTHIAAGKTLVLPFNRLAEQTKPSAVARLLKSQLNNIESSQYLLTNVKINQNARSESEDLNVESPPAAIGRFSASRSEAFRPQVVNGL</sequence>
<comment type="function">
    <text evidence="1">Transports viral genome to neighboring plant cells directly through plasmosdesmata, without any budding. The movement protein allows efficient cell to cell propagation, by bypassing the host cell wall barrier. Acts by forming a tubular structure at the host plasmodesmata, enlarging it enough to allow free passage of virion capsids (By similarity).</text>
</comment>
<comment type="subcellular location">
    <subcellularLocation>
        <location evidence="1">Host cell junction</location>
        <location evidence="1">Host plasmodesma</location>
    </subcellularLocation>
    <text evidence="1">Assembles into long tubular structures at the surface of the infected protoplast.</text>
</comment>
<comment type="similarity">
    <text evidence="2">Belongs to the cucumovirus movement protein family.</text>
</comment>
<feature type="chain" id="PRO_0000083241" description="Movement protein">
    <location>
        <begin position="1"/>
        <end position="279"/>
    </location>
</feature>
<evidence type="ECO:0000250" key="1"/>
<evidence type="ECO:0000305" key="2"/>
<keyword id="KW-1031">Host cell junction</keyword>
<keyword id="KW-0813">Transport</keyword>
<keyword id="KW-0916">Viral movement protein</keyword>
<gene>
    <name type="ORF">ORF3a</name>
</gene>
<organismHost>
    <name type="scientific">Cucumis sativus</name>
    <name type="common">Cucumber</name>
    <dbReference type="NCBI Taxonomy" id="3659"/>
</organismHost>
<organismHost>
    <name type="scientific">Cucurbita pepo</name>
    <name type="common">Vegetable marrow</name>
    <name type="synonym">Summer squash</name>
    <dbReference type="NCBI Taxonomy" id="3663"/>
</organismHost>
<organismHost>
    <name type="scientific">Musa</name>
    <dbReference type="NCBI Taxonomy" id="4640"/>
</organismHost>
<organismHost>
    <name type="scientific">Solanum lycopersicum</name>
    <name type="common">Tomato</name>
    <name type="synonym">Lycopersicon esculentum</name>
    <dbReference type="NCBI Taxonomy" id="4081"/>
</organismHost>
<organismHost>
    <name type="scientific">Spinacia oleracea</name>
    <name type="common">Spinach</name>
    <dbReference type="NCBI Taxonomy" id="3562"/>
</organismHost>
<reference key="1">
    <citation type="journal article" date="1990" name="J. Gen. Virol.">
        <title>Nucleotide sequence and evolutionary relationships of cucumber mosaic virus (CMV) strains: CMV RNA 3.</title>
        <authorList>
            <person name="Owen J."/>
            <person name="Shintaku M."/>
            <person name="Aeschleman P."/>
            <person name="Tahar S."/>
            <person name="Palukaitis P."/>
        </authorList>
    </citation>
    <scope>NUCLEOTIDE SEQUENCE [GENOMIC RNA]</scope>
</reference>
<dbReference type="EMBL" id="D10539">
    <property type="protein sequence ID" value="BAA01398.1"/>
    <property type="molecule type" value="Genomic_RNA"/>
</dbReference>
<dbReference type="GO" id="GO:0044219">
    <property type="term" value="C:host cell plasmodesma"/>
    <property type="evidence" value="ECO:0007669"/>
    <property type="project" value="UniProtKB-SubCell"/>
</dbReference>
<dbReference type="GO" id="GO:0046740">
    <property type="term" value="P:transport of virus in host, cell to cell"/>
    <property type="evidence" value="ECO:0007669"/>
    <property type="project" value="UniProtKB-KW"/>
</dbReference>
<dbReference type="InterPro" id="IPR000603">
    <property type="entry name" value="MPV"/>
</dbReference>
<dbReference type="Pfam" id="PF00803">
    <property type="entry name" value="3A"/>
    <property type="match status" value="1"/>
</dbReference>
<accession>Q00272</accession>